<feature type="chain" id="PRO_0000378940" description="Mitochondrial glycine transporter">
    <location>
        <begin position="1"/>
        <end position="348"/>
    </location>
</feature>
<feature type="transmembrane region" description="Helical; Name=1" evidence="2">
    <location>
        <begin position="16"/>
        <end position="41"/>
    </location>
</feature>
<feature type="transmembrane region" description="Helical; Name=2" evidence="2">
    <location>
        <begin position="69"/>
        <end position="95"/>
    </location>
</feature>
<feature type="transmembrane region" description="Helical; Name=3" evidence="2">
    <location>
        <begin position="136"/>
        <end position="161"/>
    </location>
</feature>
<feature type="transmembrane region" description="Helical; Name=4" evidence="2">
    <location>
        <begin position="189"/>
        <end position="212"/>
    </location>
</feature>
<feature type="transmembrane region" description="Helical; Name=5" evidence="2">
    <location>
        <begin position="253"/>
        <end position="279"/>
    </location>
</feature>
<feature type="transmembrane region" description="Helical; Name=6" evidence="2">
    <location>
        <begin position="308"/>
        <end position="326"/>
    </location>
</feature>
<feature type="repeat" description="Solcar 1" evidence="2">
    <location>
        <begin position="10"/>
        <end position="94"/>
    </location>
</feature>
<feature type="repeat" description="Solcar 2" evidence="2">
    <location>
        <begin position="130"/>
        <end position="214"/>
    </location>
</feature>
<feature type="repeat" description="Solcar 3" evidence="2">
    <location>
        <begin position="249"/>
        <end position="333"/>
    </location>
</feature>
<keyword id="KW-0472">Membrane</keyword>
<keyword id="KW-0496">Mitochondrion</keyword>
<keyword id="KW-0999">Mitochondrion inner membrane</keyword>
<keyword id="KW-1185">Reference proteome</keyword>
<keyword id="KW-0677">Repeat</keyword>
<keyword id="KW-0812">Transmembrane</keyword>
<keyword id="KW-1133">Transmembrane helix</keyword>
<keyword id="KW-0813">Transport</keyword>
<reference key="1">
    <citation type="journal article" date="2003" name="Nucleic Acids Res.">
        <title>What's in the genome of a filamentous fungus? Analysis of the Neurospora genome sequence.</title>
        <authorList>
            <person name="Mannhaupt G."/>
            <person name="Montrone C."/>
            <person name="Haase D."/>
            <person name="Mewes H.-W."/>
            <person name="Aign V."/>
            <person name="Hoheisel J.D."/>
            <person name="Fartmann B."/>
            <person name="Nyakatura G."/>
            <person name="Kempken F."/>
            <person name="Maier J."/>
            <person name="Schulte U."/>
        </authorList>
    </citation>
    <scope>NUCLEOTIDE SEQUENCE [LARGE SCALE GENOMIC DNA]</scope>
    <source>
        <strain>ATCC 24698 / 74-OR23-1A / CBS 708.71 / DSM 1257 / FGSC 987</strain>
    </source>
</reference>
<reference key="2">
    <citation type="journal article" date="2003" name="Nature">
        <title>The genome sequence of the filamentous fungus Neurospora crassa.</title>
        <authorList>
            <person name="Galagan J.E."/>
            <person name="Calvo S.E."/>
            <person name="Borkovich K.A."/>
            <person name="Selker E.U."/>
            <person name="Read N.D."/>
            <person name="Jaffe D.B."/>
            <person name="FitzHugh W."/>
            <person name="Ma L.-J."/>
            <person name="Smirnov S."/>
            <person name="Purcell S."/>
            <person name="Rehman B."/>
            <person name="Elkins T."/>
            <person name="Engels R."/>
            <person name="Wang S."/>
            <person name="Nielsen C.B."/>
            <person name="Butler J."/>
            <person name="Endrizzi M."/>
            <person name="Qui D."/>
            <person name="Ianakiev P."/>
            <person name="Bell-Pedersen D."/>
            <person name="Nelson M.A."/>
            <person name="Werner-Washburne M."/>
            <person name="Selitrennikoff C.P."/>
            <person name="Kinsey J.A."/>
            <person name="Braun E.L."/>
            <person name="Zelter A."/>
            <person name="Schulte U."/>
            <person name="Kothe G.O."/>
            <person name="Jedd G."/>
            <person name="Mewes H.-W."/>
            <person name="Staben C."/>
            <person name="Marcotte E."/>
            <person name="Greenberg D."/>
            <person name="Roy A."/>
            <person name="Foley K."/>
            <person name="Naylor J."/>
            <person name="Stange-Thomann N."/>
            <person name="Barrett R."/>
            <person name="Gnerre S."/>
            <person name="Kamal M."/>
            <person name="Kamvysselis M."/>
            <person name="Mauceli E.W."/>
            <person name="Bielke C."/>
            <person name="Rudd S."/>
            <person name="Frishman D."/>
            <person name="Krystofova S."/>
            <person name="Rasmussen C."/>
            <person name="Metzenberg R.L."/>
            <person name="Perkins D.D."/>
            <person name="Kroken S."/>
            <person name="Cogoni C."/>
            <person name="Macino G."/>
            <person name="Catcheside D.E.A."/>
            <person name="Li W."/>
            <person name="Pratt R.J."/>
            <person name="Osmani S.A."/>
            <person name="DeSouza C.P.C."/>
            <person name="Glass N.L."/>
            <person name="Orbach M.J."/>
            <person name="Berglund J.A."/>
            <person name="Voelker R."/>
            <person name="Yarden O."/>
            <person name="Plamann M."/>
            <person name="Seiler S."/>
            <person name="Dunlap J.C."/>
            <person name="Radford A."/>
            <person name="Aramayo R."/>
            <person name="Natvig D.O."/>
            <person name="Alex L.A."/>
            <person name="Mannhaupt G."/>
            <person name="Ebbole D.J."/>
            <person name="Freitag M."/>
            <person name="Paulsen I."/>
            <person name="Sachs M.S."/>
            <person name="Lander E.S."/>
            <person name="Nusbaum C."/>
            <person name="Birren B.W."/>
        </authorList>
    </citation>
    <scope>NUCLEOTIDE SEQUENCE [LARGE SCALE GENOMIC DNA]</scope>
    <source>
        <strain>ATCC 24698 / 74-OR23-1A / CBS 708.71 / DSM 1257 / FGSC 987</strain>
    </source>
</reference>
<protein>
    <recommendedName>
        <fullName evidence="2">Mitochondrial glycine transporter</fullName>
    </recommendedName>
    <alternativeName>
        <fullName evidence="2">Solute carrier family 25 member 38 homolog</fullName>
    </alternativeName>
</protein>
<proteinExistence type="inferred from homology"/>
<organism>
    <name type="scientific">Neurospora crassa (strain ATCC 24698 / 74-OR23-1A / CBS 708.71 / DSM 1257 / FGSC 987)</name>
    <dbReference type="NCBI Taxonomy" id="367110"/>
    <lineage>
        <taxon>Eukaryota</taxon>
        <taxon>Fungi</taxon>
        <taxon>Dikarya</taxon>
        <taxon>Ascomycota</taxon>
        <taxon>Pezizomycotina</taxon>
        <taxon>Sordariomycetes</taxon>
        <taxon>Sordariomycetidae</taxon>
        <taxon>Sordariales</taxon>
        <taxon>Sordariaceae</taxon>
        <taxon>Neurospora</taxon>
    </lineage>
</organism>
<comment type="function">
    <text evidence="2">Mitochondrial glycine transporter that imports glycine into the mitochondrial matrix. Plays an important role in providing glycine for the first enzymatic step in heme biosynthesis, the condensation of glycine with succinyl-CoA to produce 5-aminolevulinate (ALA) in the mitochondrial matrix.</text>
</comment>
<comment type="catalytic activity">
    <reaction evidence="1">
        <text>glycine(in) = glycine(out)</text>
        <dbReference type="Rhea" id="RHEA:70715"/>
        <dbReference type="ChEBI" id="CHEBI:57305"/>
    </reaction>
</comment>
<comment type="subcellular location">
    <subcellularLocation>
        <location evidence="2">Mitochondrion inner membrane</location>
        <topology evidence="2">Multi-pass membrane protein</topology>
    </subcellularLocation>
</comment>
<comment type="similarity">
    <text evidence="2">Belongs to the mitochondrial carrier (TC 2.A.29) family. SLC25A38 subfamily.</text>
</comment>
<accession>Q96U08</accession>
<gene>
    <name type="primary">mic-13</name>
    <name type="ORF">B7F18.090</name>
    <name type="ORF">NCU02973</name>
</gene>
<evidence type="ECO:0000250" key="1">
    <source>
        <dbReference type="UniProtKB" id="Q96DW6"/>
    </source>
</evidence>
<evidence type="ECO:0000255" key="2">
    <source>
        <dbReference type="HAMAP-Rule" id="MF_03064"/>
    </source>
</evidence>
<sequence>MSDGSRKSGTKSTFHFVAGLGSGVLSAILLQPIDLLKTRVQQSGKHSLRAALAELRSSQQGLLPSLWRGTLPSALRTGFGSAIYFTTLNTIRENAARHLPSLAAAAPTIAAASGIVAPNANQTSSSLPKLSNTGNLLAGAVARSFAGFILMPLTVLKVRYESSFYKYTSLAGAARDIARTEGARGFFAGFGATAIRDAPYAGLYVLFYEKSKQHLSNLFPQPPQPQLSTTTTLEAAAGQDGGGRMSQSRAASINFASGVFSAIICSIISNPFDAVKTRIQLQPKKYRNMVQASRKMLAEEGVRSMMDGLALRMSRKAMSSALAWTVYEELIRRAEGAWTKRGPEEVQL</sequence>
<name>S2538_NEUCR</name>
<dbReference type="EMBL" id="AL389891">
    <property type="protein sequence ID" value="CAD11801.1"/>
    <property type="molecule type" value="Genomic_DNA"/>
</dbReference>
<dbReference type="EMBL" id="CM002236">
    <property type="protein sequence ID" value="EAA36124.1"/>
    <property type="molecule type" value="Genomic_DNA"/>
</dbReference>
<dbReference type="PIR" id="T50990">
    <property type="entry name" value="T50990"/>
</dbReference>
<dbReference type="RefSeq" id="XP_965360.1">
    <property type="nucleotide sequence ID" value="XM_960267.1"/>
</dbReference>
<dbReference type="SMR" id="Q96U08"/>
<dbReference type="FunCoup" id="Q96U08">
    <property type="interactions" value="96"/>
</dbReference>
<dbReference type="STRING" id="367110.Q96U08"/>
<dbReference type="PaxDb" id="5141-EFNCRP00000002389"/>
<dbReference type="EnsemblFungi" id="EAA36124">
    <property type="protein sequence ID" value="EAA36124"/>
    <property type="gene ID" value="NCU02973"/>
</dbReference>
<dbReference type="GeneID" id="3881523"/>
<dbReference type="KEGG" id="ncr:NCU02973"/>
<dbReference type="VEuPathDB" id="FungiDB:NCU02973"/>
<dbReference type="HOGENOM" id="CLU_015166_0_3_1"/>
<dbReference type="InParanoid" id="Q96U08"/>
<dbReference type="OMA" id="WGIYEEL"/>
<dbReference type="OrthoDB" id="1924968at2759"/>
<dbReference type="Proteomes" id="UP000001805">
    <property type="component" value="Chromosome 1, Linkage Group I"/>
</dbReference>
<dbReference type="GO" id="GO:0005743">
    <property type="term" value="C:mitochondrial inner membrane"/>
    <property type="evidence" value="ECO:0007669"/>
    <property type="project" value="UniProtKB-SubCell"/>
</dbReference>
<dbReference type="GO" id="GO:0005739">
    <property type="term" value="C:mitochondrion"/>
    <property type="evidence" value="ECO:0000318"/>
    <property type="project" value="GO_Central"/>
</dbReference>
<dbReference type="GO" id="GO:0015187">
    <property type="term" value="F:glycine transmembrane transporter activity"/>
    <property type="evidence" value="ECO:0000318"/>
    <property type="project" value="GO_Central"/>
</dbReference>
<dbReference type="GO" id="GO:1904983">
    <property type="term" value="P:glycine import into mitochondrion"/>
    <property type="evidence" value="ECO:0000318"/>
    <property type="project" value="GO_Central"/>
</dbReference>
<dbReference type="GO" id="GO:0006783">
    <property type="term" value="P:heme biosynthetic process"/>
    <property type="evidence" value="ECO:0007669"/>
    <property type="project" value="EnsemblFungi"/>
</dbReference>
<dbReference type="FunFam" id="1.50.40.10:FF:000144">
    <property type="entry name" value="Mitochondrial glycine transporter"/>
    <property type="match status" value="1"/>
</dbReference>
<dbReference type="FunFam" id="1.50.40.10:FF:000173">
    <property type="entry name" value="Mitochondrial glycine transporter"/>
    <property type="match status" value="1"/>
</dbReference>
<dbReference type="Gene3D" id="1.50.40.10">
    <property type="entry name" value="Mitochondrial carrier domain"/>
    <property type="match status" value="2"/>
</dbReference>
<dbReference type="HAMAP" id="MF_03064">
    <property type="entry name" value="SLC25A38"/>
    <property type="match status" value="1"/>
</dbReference>
<dbReference type="InterPro" id="IPR030847">
    <property type="entry name" value="Hem25/SLC25A38"/>
</dbReference>
<dbReference type="InterPro" id="IPR018108">
    <property type="entry name" value="Mitochondrial_sb/sol_carrier"/>
</dbReference>
<dbReference type="InterPro" id="IPR023395">
    <property type="entry name" value="Mt_carrier_dom_sf"/>
</dbReference>
<dbReference type="PANTHER" id="PTHR46181">
    <property type="entry name" value="MITOCHONDRIAL GLYCINE TRANSPORTER"/>
    <property type="match status" value="1"/>
</dbReference>
<dbReference type="PANTHER" id="PTHR46181:SF3">
    <property type="entry name" value="MITOCHONDRIAL GLYCINE TRANSPORTER"/>
    <property type="match status" value="1"/>
</dbReference>
<dbReference type="Pfam" id="PF00153">
    <property type="entry name" value="Mito_carr"/>
    <property type="match status" value="3"/>
</dbReference>
<dbReference type="SUPFAM" id="SSF103506">
    <property type="entry name" value="Mitochondrial carrier"/>
    <property type="match status" value="1"/>
</dbReference>
<dbReference type="PROSITE" id="PS50920">
    <property type="entry name" value="SOLCAR"/>
    <property type="match status" value="3"/>
</dbReference>